<sequence length="1295" mass="142683">MDLTTTSHARVDSGGVPFTSSLNDPTPPKLSASIALPAHLHLLAKAYGIPESHILQLAWALAANEQNARTAQWEHLELDERQAISWVLRHWQDPSVHRYLSPDELRGDKHQIPATVMAVVEEYSLFQTLALTGSETEIGMCFHPSTEQPWLRVIWNPEGMLASSASRLTRALESALHAVFLTPHVKVGDLTLFSIWDHQQILQWNSHYPQATDRLVHELFKDVVDASPQANAVAAWDGELTYRELDRLSSRLSGRLQDEFGVQPETIVVLCFEKSVWAIVAMLAVVKAGGAFLHVDPQHPAVRHQAMVQTTAAKLVLCSARTRSIISASVPECTSLVIDRRAFSVEPDHVQHETLLSSQNLSPRNAAYVVCTSGSTGTPKAIVVEHASLSTSVDAQANAMEISSGSRVLQYAAYTFDVSVGDIFTALTHGACICIPSDWERSHDLAGAINRLNVNQACLTSTVASILSPAEVPGLEKLTLGGEPATRQCVDAWAEQVRLKNVYGPAECTVWCMIQPEVSRHISVSNIGHGIGARAWIVHPEDHDRLMPVGAVGELLIEGPLVARGYLNDSTRTDEVFLSQPPRWLESFGPTPSRSRFYKTGDLARYGPAGALLFEGRKDTQIKLRGQRIELSEIEYRLHRALSDQVATAVELAHPKGSTAPVLAAFITWDQGIDLQNVQNVTLDARQEFEELASRIKAEIEQALPSYMVPALFIPVQTLPLTTSGKLDRKSLRHFCSQCSHEFLKKLDDSSPADAAPKESANPAEENLARLWAQVLERKSESIRRGDNFLSLGGDSLAAMRLVNLAARDLRLTLTVADVFNSPILADQANLLRPLVQTKHIAPFELVTDGDLPIQDLMDSVAKQCGLTSDQVEDVYPCTPYQEEMVRDSLSGTRTQMGQEVIQLASDLDLSRYLSACARVFQRCPILRTRFVEISGKLLQVVIREDISWQRPTSLAAYIEADNQTPPTLGKPLARWALTEDSTHLVLTMHHAIFDGISLGQIFGAIYAVYQSIPLPQVNLTFATFIGKIYRPHHDLPDASKQFWRSYLSPTAGSNDAPLSDVERASRPCANSGTQRLVTFQAGAVKALQQHGLTEATLARAAWACTLARGRQSPDSDVIFGTILTGRNIHLPGVDALAAPALAHTPIRVRMAAAQQEKPAHFLARVQADATAMIPFEHDGMDRIRALDEQVRVACDNMRTLLVIQPIPEGLILDSKSPFPGTMLSGPRVEAREMRHFHWYGLLMECTLLPMDGFFVRMSFDDTLYSPEAAERLLDEYSQTLHELAHGLTVDGSTE</sequence>
<feature type="chain" id="PRO_0000461540" description="Nonribosomal peptide synthetase resC">
    <location>
        <begin position="1"/>
        <end position="1295"/>
    </location>
</feature>
<feature type="domain" description="Carrier" evidence="3">
    <location>
        <begin position="759"/>
        <end position="836"/>
    </location>
</feature>
<feature type="region of interest" description="Disordered" evidence="4">
    <location>
        <begin position="1"/>
        <end position="24"/>
    </location>
</feature>
<feature type="region of interest" description="Adenylation" evidence="2 8">
    <location>
        <begin position="221"/>
        <end position="624"/>
    </location>
</feature>
<feature type="region of interest" description="Condensation" evidence="2 8">
    <location>
        <begin position="873"/>
        <end position="1284"/>
    </location>
</feature>
<feature type="modified residue" description="O-(pantetheine 4'-phosphoryl)serine" evidence="3">
    <location>
        <position position="796"/>
    </location>
</feature>
<organism>
    <name type="scientific">Aspergillus sclerotiorum</name>
    <dbReference type="NCBI Taxonomy" id="138282"/>
    <lineage>
        <taxon>Eukaryota</taxon>
        <taxon>Fungi</taxon>
        <taxon>Dikarya</taxon>
        <taxon>Ascomycota</taxon>
        <taxon>Pezizomycotina</taxon>
        <taxon>Eurotiomycetes</taxon>
        <taxon>Eurotiomycetidae</taxon>
        <taxon>Eurotiales</taxon>
        <taxon>Aspergillaceae</taxon>
        <taxon>Aspergillus</taxon>
        <taxon>Aspergillus subgen. Circumdati</taxon>
    </lineage>
</organism>
<keyword id="KW-0436">Ligase</keyword>
<keyword id="KW-0596">Phosphopantetheine</keyword>
<keyword id="KW-0597">Phosphoprotein</keyword>
<gene>
    <name evidence="6" type="primary">resC</name>
</gene>
<protein>
    <recommendedName>
        <fullName evidence="6">Nonribosomal peptide synthetase resC</fullName>
        <ecNumber evidence="8">6.3.2.-</ecNumber>
    </recommendedName>
    <alternativeName>
        <fullName evidence="6">Restricticin biosynthesis cluster protein C</fullName>
    </alternativeName>
</protein>
<reference key="1">
    <citation type="journal article" date="2024" name="J. Agric. Food Chem.">
        <title>Discovery of a hybrid molecule with phytotoxic activity by genome mining, heterologous expression, and OSMAC strategy.</title>
        <authorList>
            <person name="Lu Y."/>
            <person name="Li Y."/>
            <person name="Dou M."/>
            <person name="Liu D."/>
            <person name="Lin W."/>
            <person name="Fan A."/>
        </authorList>
    </citation>
    <scope>NUCLEOTIDE SEQUENCE [GENOMIC DNA]</scope>
    <scope>FUNCTION</scope>
    <scope>CATALYTIC ACTIVITY</scope>
    <scope>PATHWAY</scope>
</reference>
<name>RESC_ASPSL</name>
<accession>P0DXV3</accession>
<proteinExistence type="evidence at protein level"/>
<evidence type="ECO:0000250" key="1">
    <source>
        <dbReference type="UniProtKB" id="A0A0L1JF11"/>
    </source>
</evidence>
<evidence type="ECO:0000255" key="2"/>
<evidence type="ECO:0000255" key="3">
    <source>
        <dbReference type="PROSITE-ProRule" id="PRU00258"/>
    </source>
</evidence>
<evidence type="ECO:0000256" key="4">
    <source>
        <dbReference type="SAM" id="MobiDB-lite"/>
    </source>
</evidence>
<evidence type="ECO:0000269" key="5">
    <source>
    </source>
</evidence>
<evidence type="ECO:0000303" key="6">
    <source>
    </source>
</evidence>
<evidence type="ECO:0000305" key="7"/>
<evidence type="ECO:0000305" key="8">
    <source>
    </source>
</evidence>
<comment type="function">
    <text evidence="1 5">Nonribosomal peptide synthetase; part of the gene cluster that mediates the biosynthesis of the tetrahydropyranyl antifungal agent restricticin that acts as an inhibitor of CYP51 and blocks the ergosterol biosynthesis (PubMed:39105744). Within the pathway, resC catalyzes the C3 esterification of restrictinol with glycine to yield restricticin. ResC represents an example of the emerging class of single-module NRPS-like enzymes that perform esterification reactions (By similarity). The highly reducing polyketide synthase resH, the short chain dehydrogenase resG, the cyclase resF, the FAD-dependent monooxygenase resA and the enoylreductase resD are required to generate the first stable intermediate desmethylrestrictinol. ResH with resD biosynthesize the first polyketide chain intermediate that is reduced by resG, followed by epoxidation by resA before 6-endo cyclization via epoxide opening by resF leads to desmethylrestrictinol. The methyltransferase resE then catalyzes the C4 O-methylation of desmethylrestrictinol to produce restrictinol, and the nonribosomal peptide synthetase resC catalyzes the C3 esterification of restrictinol with glycine that leads to restricticin (By similarity).</text>
</comment>
<comment type="catalytic activity">
    <reaction evidence="8">
        <text>restrictinol + glycine + H(+) = restricticin + H2O</text>
        <dbReference type="Rhea" id="RHEA:81535"/>
        <dbReference type="ChEBI" id="CHEBI:15377"/>
        <dbReference type="ChEBI" id="CHEBI:15378"/>
        <dbReference type="ChEBI" id="CHEBI:57305"/>
        <dbReference type="ChEBI" id="CHEBI:231923"/>
        <dbReference type="ChEBI" id="CHEBI:231924"/>
    </reaction>
    <physiologicalReaction direction="left-to-right" evidence="8">
        <dbReference type="Rhea" id="RHEA:81536"/>
    </physiologicalReaction>
</comment>
<comment type="cofactor">
    <cofactor evidence="3">
        <name>pantetheine 4'-phosphate</name>
        <dbReference type="ChEBI" id="CHEBI:47942"/>
    </cofactor>
</comment>
<comment type="pathway">
    <text evidence="5">Antifungal biosynthesis.</text>
</comment>
<comment type="domain">
    <text evidence="8">NRP synthetases are composed of discrete domains (adenylation (A), thiolation (T) or peptidyl carrier protein (PCP) and condensation (C) domains) which when grouped together are referred to as a single module. Each module is responsible for the recognition (via the A domain) and incorporation of a single amino acid into the growing peptide product. Thus, an NRP synthetase is generally composed of one or more modules and can terminate in a thioesterase domain (TE) that releases the newly synthesized peptide from the enzyme. Occasionally, methyltransferase domains (responsible for amino acid methylation) are present within the NRP synthetase. ResC has the monomodular architecture A-T-C.</text>
</comment>
<comment type="similarity">
    <text evidence="7">Belongs to the NRP synthetase family.</text>
</comment>
<dbReference type="EC" id="6.3.2.-" evidence="8"/>
<dbReference type="GO" id="GO:0005737">
    <property type="term" value="C:cytoplasm"/>
    <property type="evidence" value="ECO:0007669"/>
    <property type="project" value="TreeGrafter"/>
</dbReference>
<dbReference type="GO" id="GO:0016874">
    <property type="term" value="F:ligase activity"/>
    <property type="evidence" value="ECO:0007669"/>
    <property type="project" value="UniProtKB-KW"/>
</dbReference>
<dbReference type="GO" id="GO:0031177">
    <property type="term" value="F:phosphopantetheine binding"/>
    <property type="evidence" value="ECO:0007669"/>
    <property type="project" value="InterPro"/>
</dbReference>
<dbReference type="GO" id="GO:0043041">
    <property type="term" value="P:amino acid activation for nonribosomal peptide biosynthetic process"/>
    <property type="evidence" value="ECO:0007669"/>
    <property type="project" value="TreeGrafter"/>
</dbReference>
<dbReference type="GO" id="GO:0044550">
    <property type="term" value="P:secondary metabolite biosynthetic process"/>
    <property type="evidence" value="ECO:0007669"/>
    <property type="project" value="TreeGrafter"/>
</dbReference>
<dbReference type="CDD" id="cd05918">
    <property type="entry name" value="A_NRPS_SidN3_like"/>
    <property type="match status" value="1"/>
</dbReference>
<dbReference type="CDD" id="cd19545">
    <property type="entry name" value="FUM14_C_NRPS-like"/>
    <property type="match status" value="1"/>
</dbReference>
<dbReference type="FunFam" id="3.30.300.30:FF:000015">
    <property type="entry name" value="Nonribosomal peptide synthase SidD"/>
    <property type="match status" value="1"/>
</dbReference>
<dbReference type="FunFam" id="3.40.50.12780:FF:000014">
    <property type="entry name" value="Nonribosomal peptide synthetase 1"/>
    <property type="match status" value="1"/>
</dbReference>
<dbReference type="Gene3D" id="3.30.300.30">
    <property type="match status" value="1"/>
</dbReference>
<dbReference type="Gene3D" id="1.10.1200.10">
    <property type="entry name" value="ACP-like"/>
    <property type="match status" value="1"/>
</dbReference>
<dbReference type="Gene3D" id="3.30.559.10">
    <property type="entry name" value="Chloramphenicol acetyltransferase-like domain"/>
    <property type="match status" value="1"/>
</dbReference>
<dbReference type="Gene3D" id="3.40.50.12780">
    <property type="entry name" value="N-terminal domain of ligase-like"/>
    <property type="match status" value="1"/>
</dbReference>
<dbReference type="Gene3D" id="3.30.559.30">
    <property type="entry name" value="Nonribosomal peptide synthetase, condensation domain"/>
    <property type="match status" value="1"/>
</dbReference>
<dbReference type="InterPro" id="IPR010071">
    <property type="entry name" value="AA_adenyl_dom"/>
</dbReference>
<dbReference type="InterPro" id="IPR036736">
    <property type="entry name" value="ACP-like_sf"/>
</dbReference>
<dbReference type="InterPro" id="IPR045851">
    <property type="entry name" value="AMP-bd_C_sf"/>
</dbReference>
<dbReference type="InterPro" id="IPR020845">
    <property type="entry name" value="AMP-binding_CS"/>
</dbReference>
<dbReference type="InterPro" id="IPR000873">
    <property type="entry name" value="AMP-dep_synth/lig_dom"/>
</dbReference>
<dbReference type="InterPro" id="IPR042099">
    <property type="entry name" value="ANL_N_sf"/>
</dbReference>
<dbReference type="InterPro" id="IPR023213">
    <property type="entry name" value="CAT-like_dom_sf"/>
</dbReference>
<dbReference type="InterPro" id="IPR001242">
    <property type="entry name" value="Condensatn"/>
</dbReference>
<dbReference type="InterPro" id="IPR020806">
    <property type="entry name" value="PKS_PP-bd"/>
</dbReference>
<dbReference type="InterPro" id="IPR009081">
    <property type="entry name" value="PP-bd_ACP"/>
</dbReference>
<dbReference type="InterPro" id="IPR006162">
    <property type="entry name" value="Ppantetheine_attach_site"/>
</dbReference>
<dbReference type="NCBIfam" id="TIGR01733">
    <property type="entry name" value="AA-adenyl-dom"/>
    <property type="match status" value="1"/>
</dbReference>
<dbReference type="PANTHER" id="PTHR45527:SF1">
    <property type="entry name" value="FATTY ACID SYNTHASE"/>
    <property type="match status" value="1"/>
</dbReference>
<dbReference type="PANTHER" id="PTHR45527">
    <property type="entry name" value="NONRIBOSOMAL PEPTIDE SYNTHETASE"/>
    <property type="match status" value="1"/>
</dbReference>
<dbReference type="Pfam" id="PF00501">
    <property type="entry name" value="AMP-binding"/>
    <property type="match status" value="1"/>
</dbReference>
<dbReference type="Pfam" id="PF00668">
    <property type="entry name" value="Condensation"/>
    <property type="match status" value="1"/>
</dbReference>
<dbReference type="Pfam" id="PF00550">
    <property type="entry name" value="PP-binding"/>
    <property type="match status" value="1"/>
</dbReference>
<dbReference type="SMART" id="SM00823">
    <property type="entry name" value="PKS_PP"/>
    <property type="match status" value="1"/>
</dbReference>
<dbReference type="SUPFAM" id="SSF56801">
    <property type="entry name" value="Acetyl-CoA synthetase-like"/>
    <property type="match status" value="1"/>
</dbReference>
<dbReference type="SUPFAM" id="SSF47336">
    <property type="entry name" value="ACP-like"/>
    <property type="match status" value="1"/>
</dbReference>
<dbReference type="SUPFAM" id="SSF52777">
    <property type="entry name" value="CoA-dependent acyltransferases"/>
    <property type="match status" value="2"/>
</dbReference>
<dbReference type="PROSITE" id="PS00455">
    <property type="entry name" value="AMP_BINDING"/>
    <property type="match status" value="1"/>
</dbReference>
<dbReference type="PROSITE" id="PS50075">
    <property type="entry name" value="CARRIER"/>
    <property type="match status" value="1"/>
</dbReference>
<dbReference type="PROSITE" id="PS00012">
    <property type="entry name" value="PHOSPHOPANTETHEINE"/>
    <property type="match status" value="1"/>
</dbReference>